<evidence type="ECO:0000255" key="1">
    <source>
        <dbReference type="PROSITE-ProRule" id="PRU00625"/>
    </source>
</evidence>
<evidence type="ECO:0000269" key="2">
    <source>
    </source>
</evidence>
<evidence type="ECO:0000269" key="3">
    <source>
    </source>
</evidence>
<evidence type="ECO:0000269" key="4">
    <source>
    </source>
</evidence>
<evidence type="ECO:0000305" key="5"/>
<protein>
    <recommendedName>
        <fullName>Transcription factor MYB3</fullName>
    </recommendedName>
    <alternativeName>
        <fullName>Myb-related protein 3</fullName>
        <shortName>AtMYB3</shortName>
    </alternativeName>
</protein>
<reference key="1">
    <citation type="journal article" date="2000" name="Nature">
        <title>Sequence and analysis of chromosome 1 of the plant Arabidopsis thaliana.</title>
        <authorList>
            <person name="Theologis A."/>
            <person name="Ecker J.R."/>
            <person name="Palm C.J."/>
            <person name="Federspiel N.A."/>
            <person name="Kaul S."/>
            <person name="White O."/>
            <person name="Alonso J."/>
            <person name="Altafi H."/>
            <person name="Araujo R."/>
            <person name="Bowman C.L."/>
            <person name="Brooks S.Y."/>
            <person name="Buehler E."/>
            <person name="Chan A."/>
            <person name="Chao Q."/>
            <person name="Chen H."/>
            <person name="Cheuk R.F."/>
            <person name="Chin C.W."/>
            <person name="Chung M.K."/>
            <person name="Conn L."/>
            <person name="Conway A.B."/>
            <person name="Conway A.R."/>
            <person name="Creasy T.H."/>
            <person name="Dewar K."/>
            <person name="Dunn P."/>
            <person name="Etgu P."/>
            <person name="Feldblyum T.V."/>
            <person name="Feng J.-D."/>
            <person name="Fong B."/>
            <person name="Fujii C.Y."/>
            <person name="Gill J.E."/>
            <person name="Goldsmith A.D."/>
            <person name="Haas B."/>
            <person name="Hansen N.F."/>
            <person name="Hughes B."/>
            <person name="Huizar L."/>
            <person name="Hunter J.L."/>
            <person name="Jenkins J."/>
            <person name="Johnson-Hopson C."/>
            <person name="Khan S."/>
            <person name="Khaykin E."/>
            <person name="Kim C.J."/>
            <person name="Koo H.L."/>
            <person name="Kremenetskaia I."/>
            <person name="Kurtz D.B."/>
            <person name="Kwan A."/>
            <person name="Lam B."/>
            <person name="Langin-Hooper S."/>
            <person name="Lee A."/>
            <person name="Lee J.M."/>
            <person name="Lenz C.A."/>
            <person name="Li J.H."/>
            <person name="Li Y.-P."/>
            <person name="Lin X."/>
            <person name="Liu S.X."/>
            <person name="Liu Z.A."/>
            <person name="Luros J.S."/>
            <person name="Maiti R."/>
            <person name="Marziali A."/>
            <person name="Militscher J."/>
            <person name="Miranda M."/>
            <person name="Nguyen M."/>
            <person name="Nierman W.C."/>
            <person name="Osborne B.I."/>
            <person name="Pai G."/>
            <person name="Peterson J."/>
            <person name="Pham P.K."/>
            <person name="Rizzo M."/>
            <person name="Rooney T."/>
            <person name="Rowley D."/>
            <person name="Sakano H."/>
            <person name="Salzberg S.L."/>
            <person name="Schwartz J.R."/>
            <person name="Shinn P."/>
            <person name="Southwick A.M."/>
            <person name="Sun H."/>
            <person name="Tallon L.J."/>
            <person name="Tambunga G."/>
            <person name="Toriumi M.J."/>
            <person name="Town C.D."/>
            <person name="Utterback T."/>
            <person name="Van Aken S."/>
            <person name="Vaysberg M."/>
            <person name="Vysotskaia V.S."/>
            <person name="Walker M."/>
            <person name="Wu D."/>
            <person name="Yu G."/>
            <person name="Fraser C.M."/>
            <person name="Venter J.C."/>
            <person name="Davis R.W."/>
        </authorList>
    </citation>
    <scope>NUCLEOTIDE SEQUENCE [LARGE SCALE GENOMIC DNA]</scope>
    <source>
        <strain>cv. Columbia</strain>
    </source>
</reference>
<reference key="2">
    <citation type="journal article" date="2017" name="Plant J.">
        <title>Araport11: a complete reannotation of the Arabidopsis thaliana reference genome.</title>
        <authorList>
            <person name="Cheng C.Y."/>
            <person name="Krishnakumar V."/>
            <person name="Chan A.P."/>
            <person name="Thibaud-Nissen F."/>
            <person name="Schobel S."/>
            <person name="Town C.D."/>
        </authorList>
    </citation>
    <scope>GENOME REANNOTATION</scope>
    <source>
        <strain>cv. Columbia</strain>
    </source>
</reference>
<reference key="3">
    <citation type="journal article" date="2003" name="Science">
        <title>Empirical analysis of transcriptional activity in the Arabidopsis genome.</title>
        <authorList>
            <person name="Yamada K."/>
            <person name="Lim J."/>
            <person name="Dale J.M."/>
            <person name="Chen H."/>
            <person name="Shinn P."/>
            <person name="Palm C.J."/>
            <person name="Southwick A.M."/>
            <person name="Wu H.C."/>
            <person name="Kim C.J."/>
            <person name="Nguyen M."/>
            <person name="Pham P.K."/>
            <person name="Cheuk R.F."/>
            <person name="Karlin-Newmann G."/>
            <person name="Liu S.X."/>
            <person name="Lam B."/>
            <person name="Sakano H."/>
            <person name="Wu T."/>
            <person name="Yu G."/>
            <person name="Miranda M."/>
            <person name="Quach H.L."/>
            <person name="Tripp M."/>
            <person name="Chang C.H."/>
            <person name="Lee J.M."/>
            <person name="Toriumi M.J."/>
            <person name="Chan M.M."/>
            <person name="Tang C.C."/>
            <person name="Onodera C.S."/>
            <person name="Deng J.M."/>
            <person name="Akiyama K."/>
            <person name="Ansari Y."/>
            <person name="Arakawa T."/>
            <person name="Banh J."/>
            <person name="Banno F."/>
            <person name="Bowser L."/>
            <person name="Brooks S.Y."/>
            <person name="Carninci P."/>
            <person name="Chao Q."/>
            <person name="Choy N."/>
            <person name="Enju A."/>
            <person name="Goldsmith A.D."/>
            <person name="Gurjal M."/>
            <person name="Hansen N.F."/>
            <person name="Hayashizaki Y."/>
            <person name="Johnson-Hopson C."/>
            <person name="Hsuan V.W."/>
            <person name="Iida K."/>
            <person name="Karnes M."/>
            <person name="Khan S."/>
            <person name="Koesema E."/>
            <person name="Ishida J."/>
            <person name="Jiang P.X."/>
            <person name="Jones T."/>
            <person name="Kawai J."/>
            <person name="Kamiya A."/>
            <person name="Meyers C."/>
            <person name="Nakajima M."/>
            <person name="Narusaka M."/>
            <person name="Seki M."/>
            <person name="Sakurai T."/>
            <person name="Satou M."/>
            <person name="Tamse R."/>
            <person name="Vaysberg M."/>
            <person name="Wallender E.K."/>
            <person name="Wong C."/>
            <person name="Yamamura Y."/>
            <person name="Yuan S."/>
            <person name="Shinozaki K."/>
            <person name="Davis R.W."/>
            <person name="Theologis A."/>
            <person name="Ecker J.R."/>
        </authorList>
    </citation>
    <scope>NUCLEOTIDE SEQUENCE [LARGE SCALE MRNA]</scope>
    <source>
        <strain>cv. Columbia</strain>
    </source>
</reference>
<reference key="4">
    <citation type="journal article" date="1998" name="Plant J.">
        <title>Towards functional characterisation of the members of the R2R3-MYB gene family from Arabidopsis thaliana.</title>
        <authorList>
            <person name="Kranz H.D."/>
            <person name="Denekamp M."/>
            <person name="Greco R."/>
            <person name="Jin H.-L."/>
            <person name="Leyva A."/>
            <person name="Meissner R.C."/>
            <person name="Petroni K."/>
            <person name="Urzainqui A."/>
            <person name="Bevan M."/>
            <person name="Martin C."/>
            <person name="Smeekens S."/>
            <person name="Tonelli C."/>
            <person name="Paz-Ares J."/>
            <person name="Weisshaar B."/>
        </authorList>
    </citation>
    <scope>NUCLEOTIDE SEQUENCE [MRNA] OF 7-257</scope>
    <scope>TISSUE SPECIFICITY</scope>
    <scope>INDUCTION BY NITROGEN</scope>
    <source>
        <strain>cv. Columbia</strain>
    </source>
</reference>
<reference key="5">
    <citation type="submission" date="2004-01" db="EMBL/GenBank/DDBJ databases">
        <title>The MYB transcription factor family in Arabidopsis: a genome-wide cloning and expression pattern analysis.</title>
        <authorList>
            <person name="Qu L.-J."/>
            <person name="Gu H."/>
        </authorList>
    </citation>
    <scope>NUCLEOTIDE SEQUENCE [MRNA] OF 12-257</scope>
</reference>
<reference key="6">
    <citation type="journal article" date="2001" name="Curr. Opin. Plant Biol.">
        <title>The R2R3-MYB gene family in Arabidopsis thaliana.</title>
        <authorList>
            <person name="Stracke R."/>
            <person name="Werber M."/>
            <person name="Weisshaar B."/>
        </authorList>
    </citation>
    <scope>GENE FAMILY</scope>
    <scope>NOMENCLATURE</scope>
</reference>
<reference key="7">
    <citation type="journal article" date="2006" name="Plant Mol. Biol.">
        <title>The MYB transcription factor superfamily of Arabidopsis: expression analysis and phylogenetic comparison with the rice MYB family.</title>
        <authorList>
            <person name="Chen Y."/>
            <person name="Yang X."/>
            <person name="He K."/>
            <person name="Liu M."/>
            <person name="Li J."/>
            <person name="Gao Z."/>
            <person name="Lin Z."/>
            <person name="Zhang Y."/>
            <person name="Wang X."/>
            <person name="Qiu X."/>
            <person name="Shen Y."/>
            <person name="Zhang L."/>
            <person name="Deng X."/>
            <person name="Luo J."/>
            <person name="Deng X.-W."/>
            <person name="Chen Z."/>
            <person name="Gu H."/>
            <person name="Qu L.-J."/>
        </authorList>
    </citation>
    <scope>GENE FAMILY</scope>
    <scope>INDUCTION BY ABA; SA AND HIGH SALT</scope>
</reference>
<reference key="8">
    <citation type="journal article" date="2008" name="Biochem. Biophys. Res. Commun.">
        <title>The C-terminal region (640-967) of Arabidopsis CPL1 interacts with the abiotic stress- and ABA-responsive transcription factors.</title>
        <authorList>
            <person name="Bang W.Y."/>
            <person name="Kim S.W."/>
            <person name="Jeong I.S."/>
            <person name="Koiwa H."/>
            <person name="Bahk J.D."/>
        </authorList>
    </citation>
    <scope>INTERACTION WITH CPL1</scope>
    <scope>SUBCELLULAR LOCATION</scope>
    <scope>INDUCTION BY ABA</scope>
</reference>
<dbReference type="EMBL" id="AC003979">
    <property type="protein sequence ID" value="AAC25522.1"/>
    <property type="molecule type" value="Genomic_DNA"/>
</dbReference>
<dbReference type="EMBL" id="AC006551">
    <property type="protein sequence ID" value="AAF18515.1"/>
    <property type="status" value="ALT_INIT"/>
    <property type="molecule type" value="Genomic_DNA"/>
</dbReference>
<dbReference type="EMBL" id="CP002684">
    <property type="protein sequence ID" value="AEE30263.1"/>
    <property type="molecule type" value="Genomic_DNA"/>
</dbReference>
<dbReference type="EMBL" id="AY072543">
    <property type="protein sequence ID" value="AAL60051.1"/>
    <property type="molecule type" value="mRNA"/>
</dbReference>
<dbReference type="EMBL" id="BT000841">
    <property type="protein sequence ID" value="AAN38678.1"/>
    <property type="molecule type" value="mRNA"/>
</dbReference>
<dbReference type="EMBL" id="AF062859">
    <property type="protein sequence ID" value="AAC83581.1"/>
    <property type="molecule type" value="mRNA"/>
</dbReference>
<dbReference type="EMBL" id="AY519557">
    <property type="protein sequence ID" value="AAS10027.1"/>
    <property type="molecule type" value="mRNA"/>
</dbReference>
<dbReference type="PIR" id="T00780">
    <property type="entry name" value="T00780"/>
</dbReference>
<dbReference type="PIR" id="T51631">
    <property type="entry name" value="T51631"/>
</dbReference>
<dbReference type="RefSeq" id="NP_564176.2">
    <property type="nucleotide sequence ID" value="NM_102111.4"/>
</dbReference>
<dbReference type="SMR" id="Q9S9K9"/>
<dbReference type="BioGRID" id="24109">
    <property type="interactions" value="9"/>
</dbReference>
<dbReference type="IntAct" id="Q9S9K9">
    <property type="interactions" value="8"/>
</dbReference>
<dbReference type="STRING" id="3702.Q9S9K9"/>
<dbReference type="PaxDb" id="3702-AT1G22640.1"/>
<dbReference type="ProteomicsDB" id="251259"/>
<dbReference type="EnsemblPlants" id="AT1G22640.1">
    <property type="protein sequence ID" value="AT1G22640.1"/>
    <property type="gene ID" value="AT1G22640"/>
</dbReference>
<dbReference type="GeneID" id="838870"/>
<dbReference type="Gramene" id="AT1G22640.1">
    <property type="protein sequence ID" value="AT1G22640.1"/>
    <property type="gene ID" value="AT1G22640"/>
</dbReference>
<dbReference type="KEGG" id="ath:AT1G22640"/>
<dbReference type="Araport" id="AT1G22640"/>
<dbReference type="TAIR" id="AT1G22640">
    <property type="gene designation" value="MYB3"/>
</dbReference>
<dbReference type="eggNOG" id="KOG0048">
    <property type="taxonomic scope" value="Eukaryota"/>
</dbReference>
<dbReference type="HOGENOM" id="CLU_028567_23_2_1"/>
<dbReference type="InParanoid" id="Q9S9K9"/>
<dbReference type="OMA" id="CRIGSHD"/>
<dbReference type="PhylomeDB" id="Q9S9K9"/>
<dbReference type="PRO" id="PR:Q9S9K9"/>
<dbReference type="Proteomes" id="UP000006548">
    <property type="component" value="Chromosome 1"/>
</dbReference>
<dbReference type="ExpressionAtlas" id="Q9S9K9">
    <property type="expression patterns" value="baseline and differential"/>
</dbReference>
<dbReference type="GO" id="GO:0005634">
    <property type="term" value="C:nucleus"/>
    <property type="evidence" value="ECO:0007669"/>
    <property type="project" value="UniProtKB-SubCell"/>
</dbReference>
<dbReference type="GO" id="GO:0003700">
    <property type="term" value="F:DNA-binding transcription factor activity"/>
    <property type="evidence" value="ECO:0000250"/>
    <property type="project" value="TAIR"/>
</dbReference>
<dbReference type="GO" id="GO:0000976">
    <property type="term" value="F:transcription cis-regulatory region binding"/>
    <property type="evidence" value="ECO:0000353"/>
    <property type="project" value="TAIR"/>
</dbReference>
<dbReference type="GO" id="GO:0009800">
    <property type="term" value="P:cinnamic acid biosynthetic process"/>
    <property type="evidence" value="ECO:0000304"/>
    <property type="project" value="TAIR"/>
</dbReference>
<dbReference type="GO" id="GO:0009892">
    <property type="term" value="P:negative regulation of metabolic process"/>
    <property type="evidence" value="ECO:0000304"/>
    <property type="project" value="TAIR"/>
</dbReference>
<dbReference type="GO" id="GO:0009611">
    <property type="term" value="P:response to wounding"/>
    <property type="evidence" value="ECO:0000270"/>
    <property type="project" value="TAIR"/>
</dbReference>
<dbReference type="CDD" id="cd00167">
    <property type="entry name" value="SANT"/>
    <property type="match status" value="2"/>
</dbReference>
<dbReference type="FunFam" id="1.10.10.60:FF:000157">
    <property type="entry name" value="Myb transcription factor"/>
    <property type="match status" value="1"/>
</dbReference>
<dbReference type="FunFam" id="1.10.10.60:FF:000001">
    <property type="entry name" value="MYB-related transcription factor"/>
    <property type="match status" value="1"/>
</dbReference>
<dbReference type="Gene3D" id="1.10.10.60">
    <property type="entry name" value="Homeodomain-like"/>
    <property type="match status" value="2"/>
</dbReference>
<dbReference type="InterPro" id="IPR009057">
    <property type="entry name" value="Homeodomain-like_sf"/>
</dbReference>
<dbReference type="InterPro" id="IPR017930">
    <property type="entry name" value="Myb_dom"/>
</dbReference>
<dbReference type="InterPro" id="IPR015495">
    <property type="entry name" value="Myb_TF_plants"/>
</dbReference>
<dbReference type="InterPro" id="IPR001005">
    <property type="entry name" value="SANT/Myb"/>
</dbReference>
<dbReference type="PANTHER" id="PTHR47999:SF108">
    <property type="entry name" value="TRANSCRIPTION FACTOR MYB3"/>
    <property type="match status" value="1"/>
</dbReference>
<dbReference type="PANTHER" id="PTHR47999">
    <property type="entry name" value="TRANSCRIPTION FACTOR MYB8-RELATED-RELATED"/>
    <property type="match status" value="1"/>
</dbReference>
<dbReference type="Pfam" id="PF00249">
    <property type="entry name" value="Myb_DNA-binding"/>
    <property type="match status" value="2"/>
</dbReference>
<dbReference type="SMART" id="SM00717">
    <property type="entry name" value="SANT"/>
    <property type="match status" value="2"/>
</dbReference>
<dbReference type="SUPFAM" id="SSF46689">
    <property type="entry name" value="Homeodomain-like"/>
    <property type="match status" value="1"/>
</dbReference>
<dbReference type="PROSITE" id="PS51294">
    <property type="entry name" value="HTH_MYB"/>
    <property type="match status" value="2"/>
</dbReference>
<proteinExistence type="evidence at protein level"/>
<organism>
    <name type="scientific">Arabidopsis thaliana</name>
    <name type="common">Mouse-ear cress</name>
    <dbReference type="NCBI Taxonomy" id="3702"/>
    <lineage>
        <taxon>Eukaryota</taxon>
        <taxon>Viridiplantae</taxon>
        <taxon>Streptophyta</taxon>
        <taxon>Embryophyta</taxon>
        <taxon>Tracheophyta</taxon>
        <taxon>Spermatophyta</taxon>
        <taxon>Magnoliopsida</taxon>
        <taxon>eudicotyledons</taxon>
        <taxon>Gunneridae</taxon>
        <taxon>Pentapetalae</taxon>
        <taxon>rosids</taxon>
        <taxon>malvids</taxon>
        <taxon>Brassicales</taxon>
        <taxon>Brassicaceae</taxon>
        <taxon>Camelineae</taxon>
        <taxon>Arabidopsis</taxon>
    </lineage>
</organism>
<sequence>MGRSPCCEKAHMNKGAWTKEEDQLLVDYIRKHGEGCWRSLPRAAGLQRCGKSCRLRWMNYLRPDLKRGNFTEEEDELIIKLHSLLGNKWSLIAGRLPGRTDNEIKNYWNTHIKRKLLSRGIDPNSHRLINESVVSPSSLQNDVVETIHLDFSGPVKPEPVREEIGMVNNCESSGTTSEKDYGNEEDWVLNLELSVGPSYRYESTRKVSVVDSAESTRRWGSELFGAHESDAVCLCCRIGLFRNESCRNCRVSDVRTH</sequence>
<name>MYB3_ARATH</name>
<keyword id="KW-0238">DNA-binding</keyword>
<keyword id="KW-0539">Nucleus</keyword>
<keyword id="KW-1185">Reference proteome</keyword>
<keyword id="KW-0677">Repeat</keyword>
<keyword id="KW-0804">Transcription</keyword>
<keyword id="KW-0805">Transcription regulation</keyword>
<feature type="chain" id="PRO_0000376087" description="Transcription factor MYB3">
    <location>
        <begin position="1"/>
        <end position="257"/>
    </location>
</feature>
<feature type="domain" description="HTH myb-type 1" evidence="1">
    <location>
        <begin position="9"/>
        <end position="61"/>
    </location>
</feature>
<feature type="domain" description="HTH myb-type 2" evidence="1">
    <location>
        <begin position="62"/>
        <end position="116"/>
    </location>
</feature>
<feature type="DNA-binding region" description="H-T-H motif" evidence="1">
    <location>
        <begin position="37"/>
        <end position="61"/>
    </location>
</feature>
<feature type="DNA-binding region" description="H-T-H motif" evidence="1">
    <location>
        <begin position="89"/>
        <end position="112"/>
    </location>
</feature>
<feature type="short sequence motif" description="Required for interaction with CPL1">
    <location>
        <begin position="189"/>
        <end position="193"/>
    </location>
</feature>
<feature type="sequence conflict" description="In Ref. 4; AAC83581." evidence="5" ref="4">
    <original>CEK</original>
    <variation>HAS</variation>
    <location>
        <begin position="7"/>
        <end position="9"/>
    </location>
</feature>
<gene>
    <name type="primary">MYB3</name>
    <name type="ordered locus">At1g22640</name>
    <name type="ORF">F12K8.1</name>
    <name type="ORF">T22J18.19</name>
</gene>
<accession>Q9S9K9</accession>
<accession>Q9S7Y2</accession>
<comment type="subunit">
    <text evidence="3">Interacts with CPL1.</text>
</comment>
<comment type="interaction">
    <interactant intactId="EBI-1786591">
        <id>Q9S9K9</id>
    </interactant>
    <interactant intactId="EBI-4426649">
        <id>Q17TI5</id>
        <label>BRX</label>
    </interactant>
    <organismsDiffer>false</organismsDiffer>
    <experiments>3</experiments>
</comment>
<comment type="subcellular location">
    <subcellularLocation>
        <location evidence="1 3">Nucleus</location>
    </subcellularLocation>
</comment>
<comment type="tissue specificity">
    <text evidence="4">Expressed in roots, stems, leaves, flowers and siliques.</text>
</comment>
<comment type="induction">
    <text evidence="2 3 4">By nitrogen, salicylic acid, NaCl and abscisic acid (ABA).</text>
</comment>
<comment type="sequence caution" evidence="5">
    <conflict type="erroneous initiation">
        <sequence resource="EMBL-CDS" id="AAF18515"/>
    </conflict>
</comment>